<organism>
    <name type="scientific">Malacoplasma penetrans (strain HF-2)</name>
    <name type="common">Mycoplasma penetrans</name>
    <dbReference type="NCBI Taxonomy" id="272633"/>
    <lineage>
        <taxon>Bacteria</taxon>
        <taxon>Bacillati</taxon>
        <taxon>Mycoplasmatota</taxon>
        <taxon>Mycoplasmoidales</taxon>
        <taxon>Mycoplasmoidaceae</taxon>
        <taxon>Malacoplasma</taxon>
    </lineage>
</organism>
<sequence>MINKSIIRNDFKTLETSLKNRNSKLDISSLKDLDKKQSELLLIIESCNKKRNEISKSIGIYIGKKDNKKVDELKKEMESIKNTLETTNEELKTISAKVDDILLSIPNIPDSSVPIGKSEDENVEIKKWGTPTKFDFNHKAHWDLITDLDIGDFERATKVTGSRFFIYKGLGSKLMRALQMLTLDINTSNGYLEMSLPVIVNSASLTSTGQLPKFKEDLFALENSDYYLSPTLEVQLTNYYRNEILEESALPMKFTASSLNFRSEAGSAGKDTRGIIRQHQFYKTELVNLVHPEKSYQALEEMTLNAESILEALELPYRRILLCTGDMGFSSSKTYDIEVWLPSYNSYKEISSCSNCLDFQARRSMIRFKNSKTNKNELVHTLNGSSLALDRLFAAVVENYQNKDGSITIPKALVKYMGIDSIKKTK</sequence>
<feature type="chain" id="PRO_0000122082" description="Serine--tRNA ligase">
    <location>
        <begin position="1"/>
        <end position="426"/>
    </location>
</feature>
<feature type="binding site" evidence="1">
    <location>
        <begin position="231"/>
        <end position="233"/>
    </location>
    <ligand>
        <name>L-serine</name>
        <dbReference type="ChEBI" id="CHEBI:33384"/>
    </ligand>
</feature>
<feature type="binding site" evidence="1">
    <location>
        <begin position="262"/>
        <end position="264"/>
    </location>
    <ligand>
        <name>ATP</name>
        <dbReference type="ChEBI" id="CHEBI:30616"/>
    </ligand>
</feature>
<feature type="binding site" evidence="1">
    <location>
        <position position="285"/>
    </location>
    <ligand>
        <name>L-serine</name>
        <dbReference type="ChEBI" id="CHEBI:33384"/>
    </ligand>
</feature>
<feature type="binding site" evidence="1">
    <location>
        <begin position="349"/>
        <end position="352"/>
    </location>
    <ligand>
        <name>ATP</name>
        <dbReference type="ChEBI" id="CHEBI:30616"/>
    </ligand>
</feature>
<feature type="binding site" evidence="1">
    <location>
        <position position="385"/>
    </location>
    <ligand>
        <name>L-serine</name>
        <dbReference type="ChEBI" id="CHEBI:33384"/>
    </ligand>
</feature>
<comment type="function">
    <text evidence="1">Catalyzes the attachment of serine to tRNA(Ser). Is also able to aminoacylate tRNA(Sec) with serine, to form the misacylated tRNA L-seryl-tRNA(Sec), which will be further converted into selenocysteinyl-tRNA(Sec).</text>
</comment>
<comment type="catalytic activity">
    <reaction evidence="1">
        <text>tRNA(Ser) + L-serine + ATP = L-seryl-tRNA(Ser) + AMP + diphosphate + H(+)</text>
        <dbReference type="Rhea" id="RHEA:12292"/>
        <dbReference type="Rhea" id="RHEA-COMP:9669"/>
        <dbReference type="Rhea" id="RHEA-COMP:9703"/>
        <dbReference type="ChEBI" id="CHEBI:15378"/>
        <dbReference type="ChEBI" id="CHEBI:30616"/>
        <dbReference type="ChEBI" id="CHEBI:33019"/>
        <dbReference type="ChEBI" id="CHEBI:33384"/>
        <dbReference type="ChEBI" id="CHEBI:78442"/>
        <dbReference type="ChEBI" id="CHEBI:78533"/>
        <dbReference type="ChEBI" id="CHEBI:456215"/>
        <dbReference type="EC" id="6.1.1.11"/>
    </reaction>
</comment>
<comment type="catalytic activity">
    <reaction evidence="1">
        <text>tRNA(Sec) + L-serine + ATP = L-seryl-tRNA(Sec) + AMP + diphosphate + H(+)</text>
        <dbReference type="Rhea" id="RHEA:42580"/>
        <dbReference type="Rhea" id="RHEA-COMP:9742"/>
        <dbReference type="Rhea" id="RHEA-COMP:10128"/>
        <dbReference type="ChEBI" id="CHEBI:15378"/>
        <dbReference type="ChEBI" id="CHEBI:30616"/>
        <dbReference type="ChEBI" id="CHEBI:33019"/>
        <dbReference type="ChEBI" id="CHEBI:33384"/>
        <dbReference type="ChEBI" id="CHEBI:78442"/>
        <dbReference type="ChEBI" id="CHEBI:78533"/>
        <dbReference type="ChEBI" id="CHEBI:456215"/>
        <dbReference type="EC" id="6.1.1.11"/>
    </reaction>
</comment>
<comment type="pathway">
    <text evidence="1">Aminoacyl-tRNA biosynthesis; selenocysteinyl-tRNA(Sec) biosynthesis; L-seryl-tRNA(Sec) from L-serine and tRNA(Sec): step 1/1.</text>
</comment>
<comment type="subunit">
    <text evidence="1">Homodimer. The tRNA molecule binds across the dimer.</text>
</comment>
<comment type="subcellular location">
    <subcellularLocation>
        <location evidence="1">Cytoplasm</location>
    </subcellularLocation>
</comment>
<comment type="domain">
    <text evidence="1">Consists of two distinct domains, a catalytic core and a N-terminal extension that is involved in tRNA binding.</text>
</comment>
<comment type="similarity">
    <text evidence="1">Belongs to the class-II aminoacyl-tRNA synthetase family. Type-1 seryl-tRNA synthetase subfamily.</text>
</comment>
<name>SYS_MALP2</name>
<gene>
    <name evidence="1" type="primary">serS</name>
    <name type="ordered locus">MYPE4060</name>
</gene>
<accession>Q8EW01</accession>
<evidence type="ECO:0000255" key="1">
    <source>
        <dbReference type="HAMAP-Rule" id="MF_00176"/>
    </source>
</evidence>
<protein>
    <recommendedName>
        <fullName evidence="1">Serine--tRNA ligase</fullName>
        <ecNumber evidence="1">6.1.1.11</ecNumber>
    </recommendedName>
    <alternativeName>
        <fullName evidence="1">Seryl-tRNA synthetase</fullName>
        <shortName evidence="1">SerRS</shortName>
    </alternativeName>
    <alternativeName>
        <fullName evidence="1">Seryl-tRNA(Ser/Sec) synthetase</fullName>
    </alternativeName>
</protein>
<keyword id="KW-0030">Aminoacyl-tRNA synthetase</keyword>
<keyword id="KW-0067">ATP-binding</keyword>
<keyword id="KW-0963">Cytoplasm</keyword>
<keyword id="KW-0436">Ligase</keyword>
<keyword id="KW-0547">Nucleotide-binding</keyword>
<keyword id="KW-0648">Protein biosynthesis</keyword>
<keyword id="KW-1185">Reference proteome</keyword>
<proteinExistence type="inferred from homology"/>
<reference key="1">
    <citation type="journal article" date="2002" name="Nucleic Acids Res.">
        <title>The complete genomic sequence of Mycoplasma penetrans, an intracellular bacterial pathogen in humans.</title>
        <authorList>
            <person name="Sasaki Y."/>
            <person name="Ishikawa J."/>
            <person name="Yamashita A."/>
            <person name="Oshima K."/>
            <person name="Kenri T."/>
            <person name="Furuya K."/>
            <person name="Yoshino C."/>
            <person name="Horino A."/>
            <person name="Shiba T."/>
            <person name="Sasaki T."/>
            <person name="Hattori M."/>
        </authorList>
    </citation>
    <scope>NUCLEOTIDE SEQUENCE [LARGE SCALE GENOMIC DNA]</scope>
    <source>
        <strain>HF-2</strain>
    </source>
</reference>
<dbReference type="EC" id="6.1.1.11" evidence="1"/>
<dbReference type="EMBL" id="BA000026">
    <property type="protein sequence ID" value="BAC44196.1"/>
    <property type="molecule type" value="Genomic_DNA"/>
</dbReference>
<dbReference type="RefSeq" id="WP_011077232.1">
    <property type="nucleotide sequence ID" value="NC_004432.1"/>
</dbReference>
<dbReference type="SMR" id="Q8EW01"/>
<dbReference type="FunCoup" id="Q8EW01">
    <property type="interactions" value="249"/>
</dbReference>
<dbReference type="STRING" id="272633.gene:10731522"/>
<dbReference type="KEGG" id="mpe:MYPE4060"/>
<dbReference type="eggNOG" id="COG0172">
    <property type="taxonomic scope" value="Bacteria"/>
</dbReference>
<dbReference type="HOGENOM" id="CLU_023797_1_1_14"/>
<dbReference type="InParanoid" id="Q8EW01"/>
<dbReference type="UniPathway" id="UPA00906">
    <property type="reaction ID" value="UER00895"/>
</dbReference>
<dbReference type="Proteomes" id="UP000002522">
    <property type="component" value="Chromosome"/>
</dbReference>
<dbReference type="GO" id="GO:0005737">
    <property type="term" value="C:cytoplasm"/>
    <property type="evidence" value="ECO:0007669"/>
    <property type="project" value="UniProtKB-SubCell"/>
</dbReference>
<dbReference type="GO" id="GO:0005524">
    <property type="term" value="F:ATP binding"/>
    <property type="evidence" value="ECO:0007669"/>
    <property type="project" value="UniProtKB-UniRule"/>
</dbReference>
<dbReference type="GO" id="GO:0004828">
    <property type="term" value="F:serine-tRNA ligase activity"/>
    <property type="evidence" value="ECO:0007669"/>
    <property type="project" value="UniProtKB-UniRule"/>
</dbReference>
<dbReference type="GO" id="GO:0016260">
    <property type="term" value="P:selenocysteine biosynthetic process"/>
    <property type="evidence" value="ECO:0007669"/>
    <property type="project" value="UniProtKB-UniRule"/>
</dbReference>
<dbReference type="GO" id="GO:0006434">
    <property type="term" value="P:seryl-tRNA aminoacylation"/>
    <property type="evidence" value="ECO:0007669"/>
    <property type="project" value="UniProtKB-UniRule"/>
</dbReference>
<dbReference type="CDD" id="cd00770">
    <property type="entry name" value="SerRS_core"/>
    <property type="match status" value="1"/>
</dbReference>
<dbReference type="Gene3D" id="3.30.930.10">
    <property type="entry name" value="Bira Bifunctional Protein, Domain 2"/>
    <property type="match status" value="1"/>
</dbReference>
<dbReference type="Gene3D" id="1.10.287.40">
    <property type="entry name" value="Serine-tRNA synthetase, tRNA binding domain"/>
    <property type="match status" value="1"/>
</dbReference>
<dbReference type="HAMAP" id="MF_00176">
    <property type="entry name" value="Ser_tRNA_synth_type1"/>
    <property type="match status" value="1"/>
</dbReference>
<dbReference type="InterPro" id="IPR002314">
    <property type="entry name" value="aa-tRNA-synt_IIb"/>
</dbReference>
<dbReference type="InterPro" id="IPR006195">
    <property type="entry name" value="aa-tRNA-synth_II"/>
</dbReference>
<dbReference type="InterPro" id="IPR045864">
    <property type="entry name" value="aa-tRNA-synth_II/BPL/LPL"/>
</dbReference>
<dbReference type="InterPro" id="IPR002317">
    <property type="entry name" value="Ser-tRNA-ligase_type_1"/>
</dbReference>
<dbReference type="InterPro" id="IPR015866">
    <property type="entry name" value="Ser-tRNA-synth_1_N"/>
</dbReference>
<dbReference type="InterPro" id="IPR042103">
    <property type="entry name" value="SerRS_1_N_sf"/>
</dbReference>
<dbReference type="InterPro" id="IPR033729">
    <property type="entry name" value="SerRS_core"/>
</dbReference>
<dbReference type="InterPro" id="IPR010978">
    <property type="entry name" value="tRNA-bd_arm"/>
</dbReference>
<dbReference type="NCBIfam" id="TIGR00414">
    <property type="entry name" value="serS"/>
    <property type="match status" value="1"/>
</dbReference>
<dbReference type="PANTHER" id="PTHR43697:SF1">
    <property type="entry name" value="SERINE--TRNA LIGASE"/>
    <property type="match status" value="1"/>
</dbReference>
<dbReference type="PANTHER" id="PTHR43697">
    <property type="entry name" value="SERYL-TRNA SYNTHETASE"/>
    <property type="match status" value="1"/>
</dbReference>
<dbReference type="Pfam" id="PF02403">
    <property type="entry name" value="Seryl_tRNA_N"/>
    <property type="match status" value="1"/>
</dbReference>
<dbReference type="Pfam" id="PF00587">
    <property type="entry name" value="tRNA-synt_2b"/>
    <property type="match status" value="1"/>
</dbReference>
<dbReference type="PIRSF" id="PIRSF001529">
    <property type="entry name" value="Ser-tRNA-synth_IIa"/>
    <property type="match status" value="1"/>
</dbReference>
<dbReference type="PRINTS" id="PR00981">
    <property type="entry name" value="TRNASYNTHSER"/>
</dbReference>
<dbReference type="SUPFAM" id="SSF55681">
    <property type="entry name" value="Class II aaRS and biotin synthetases"/>
    <property type="match status" value="1"/>
</dbReference>
<dbReference type="SUPFAM" id="SSF46589">
    <property type="entry name" value="tRNA-binding arm"/>
    <property type="match status" value="1"/>
</dbReference>
<dbReference type="PROSITE" id="PS50862">
    <property type="entry name" value="AA_TRNA_LIGASE_II"/>
    <property type="match status" value="1"/>
</dbReference>